<comment type="function">
    <text evidence="1">Catalyzes the isomerization between 2-isopropylmalate and 3-isopropylmalate, via the formation of 2-isopropylmaleate.</text>
</comment>
<comment type="catalytic activity">
    <reaction evidence="1">
        <text>(2R,3S)-3-isopropylmalate = (2S)-2-isopropylmalate</text>
        <dbReference type="Rhea" id="RHEA:32287"/>
        <dbReference type="ChEBI" id="CHEBI:1178"/>
        <dbReference type="ChEBI" id="CHEBI:35121"/>
        <dbReference type="EC" id="4.2.1.33"/>
    </reaction>
</comment>
<comment type="pathway">
    <text evidence="1">Amino-acid biosynthesis; L-leucine biosynthesis; L-leucine from 3-methyl-2-oxobutanoate: step 2/4.</text>
</comment>
<comment type="subunit">
    <text evidence="1">Heterodimer of LeuC and LeuD.</text>
</comment>
<comment type="similarity">
    <text evidence="1">Belongs to the LeuD family. LeuD type 1 subfamily.</text>
</comment>
<proteinExistence type="inferred from homology"/>
<keyword id="KW-0028">Amino-acid biosynthesis</keyword>
<keyword id="KW-0100">Branched-chain amino acid biosynthesis</keyword>
<keyword id="KW-0432">Leucine biosynthesis</keyword>
<keyword id="KW-0456">Lyase</keyword>
<reference key="1">
    <citation type="journal article" date="2008" name="BMC Genomics">
        <title>Comparative genomic analysis of the gut bacterium Bifidobacterium longum reveals loci susceptible to deletion during pure culture growth.</title>
        <authorList>
            <person name="Lee J.H."/>
            <person name="Karamychev V.N."/>
            <person name="Kozyavkin S.A."/>
            <person name="Mills D."/>
            <person name="Pavlov A.R."/>
            <person name="Pavlova N.V."/>
            <person name="Polouchine N.N."/>
            <person name="Richardson P.M."/>
            <person name="Shakhova V.V."/>
            <person name="Slesarev A.I."/>
            <person name="Weimer B."/>
            <person name="O'Sullivan D.J."/>
        </authorList>
    </citation>
    <scope>NUCLEOTIDE SEQUENCE [LARGE SCALE GENOMIC DNA]</scope>
    <source>
        <strain>DJO10A</strain>
    </source>
</reference>
<name>LEUD_BIFLD</name>
<feature type="chain" id="PRO_1000135792" description="3-isopropylmalate dehydratase small subunit">
    <location>
        <begin position="1"/>
        <end position="230"/>
    </location>
</feature>
<organism>
    <name type="scientific">Bifidobacterium longum (strain DJO10A)</name>
    <dbReference type="NCBI Taxonomy" id="205913"/>
    <lineage>
        <taxon>Bacteria</taxon>
        <taxon>Bacillati</taxon>
        <taxon>Actinomycetota</taxon>
        <taxon>Actinomycetes</taxon>
        <taxon>Bifidobacteriales</taxon>
        <taxon>Bifidobacteriaceae</taxon>
        <taxon>Bifidobacterium</taxon>
    </lineage>
</organism>
<evidence type="ECO:0000255" key="1">
    <source>
        <dbReference type="HAMAP-Rule" id="MF_01031"/>
    </source>
</evidence>
<accession>B3DPI3</accession>
<gene>
    <name evidence="1" type="primary">leuD</name>
    <name type="ordered locus">BLD_1597</name>
</gene>
<dbReference type="EC" id="4.2.1.33" evidence="1"/>
<dbReference type="EMBL" id="CP000605">
    <property type="protein sequence ID" value="ACD99042.1"/>
    <property type="molecule type" value="Genomic_DNA"/>
</dbReference>
<dbReference type="RefSeq" id="WP_007053083.1">
    <property type="nucleotide sequence ID" value="NZ_AABM02000009.1"/>
</dbReference>
<dbReference type="SMR" id="B3DPI3"/>
<dbReference type="GeneID" id="69578988"/>
<dbReference type="KEGG" id="blj:BLD_1597"/>
<dbReference type="HOGENOM" id="CLU_081378_0_1_11"/>
<dbReference type="UniPathway" id="UPA00048">
    <property type="reaction ID" value="UER00071"/>
</dbReference>
<dbReference type="Proteomes" id="UP000002419">
    <property type="component" value="Chromosome"/>
</dbReference>
<dbReference type="GO" id="GO:0009316">
    <property type="term" value="C:3-isopropylmalate dehydratase complex"/>
    <property type="evidence" value="ECO:0007669"/>
    <property type="project" value="InterPro"/>
</dbReference>
<dbReference type="GO" id="GO:0003861">
    <property type="term" value="F:3-isopropylmalate dehydratase activity"/>
    <property type="evidence" value="ECO:0007669"/>
    <property type="project" value="UniProtKB-UniRule"/>
</dbReference>
<dbReference type="GO" id="GO:0009098">
    <property type="term" value="P:L-leucine biosynthetic process"/>
    <property type="evidence" value="ECO:0007669"/>
    <property type="project" value="UniProtKB-UniRule"/>
</dbReference>
<dbReference type="CDD" id="cd01577">
    <property type="entry name" value="IPMI_Swivel"/>
    <property type="match status" value="1"/>
</dbReference>
<dbReference type="FunFam" id="3.20.19.10:FF:000003">
    <property type="entry name" value="3-isopropylmalate dehydratase small subunit"/>
    <property type="match status" value="1"/>
</dbReference>
<dbReference type="Gene3D" id="3.20.19.10">
    <property type="entry name" value="Aconitase, domain 4"/>
    <property type="match status" value="1"/>
</dbReference>
<dbReference type="HAMAP" id="MF_01031">
    <property type="entry name" value="LeuD_type1"/>
    <property type="match status" value="1"/>
</dbReference>
<dbReference type="InterPro" id="IPR004431">
    <property type="entry name" value="3-IsopropMal_deHydase_ssu"/>
</dbReference>
<dbReference type="InterPro" id="IPR015928">
    <property type="entry name" value="Aconitase/3IPM_dehydase_swvl"/>
</dbReference>
<dbReference type="InterPro" id="IPR000573">
    <property type="entry name" value="AconitaseA/IPMdHydase_ssu_swvl"/>
</dbReference>
<dbReference type="InterPro" id="IPR033940">
    <property type="entry name" value="IPMI_Swivel"/>
</dbReference>
<dbReference type="InterPro" id="IPR050075">
    <property type="entry name" value="LeuD"/>
</dbReference>
<dbReference type="NCBIfam" id="TIGR00171">
    <property type="entry name" value="leuD"/>
    <property type="match status" value="1"/>
</dbReference>
<dbReference type="NCBIfam" id="NF002458">
    <property type="entry name" value="PRK01641.1"/>
    <property type="match status" value="1"/>
</dbReference>
<dbReference type="PANTHER" id="PTHR43345:SF5">
    <property type="entry name" value="3-ISOPROPYLMALATE DEHYDRATASE SMALL SUBUNIT"/>
    <property type="match status" value="1"/>
</dbReference>
<dbReference type="PANTHER" id="PTHR43345">
    <property type="entry name" value="3-ISOPROPYLMALATE DEHYDRATASE SMALL SUBUNIT 2-RELATED-RELATED"/>
    <property type="match status" value="1"/>
</dbReference>
<dbReference type="Pfam" id="PF00694">
    <property type="entry name" value="Aconitase_C"/>
    <property type="match status" value="1"/>
</dbReference>
<dbReference type="SUPFAM" id="SSF52016">
    <property type="entry name" value="LeuD/IlvD-like"/>
    <property type="match status" value="1"/>
</dbReference>
<protein>
    <recommendedName>
        <fullName evidence="1">3-isopropylmalate dehydratase small subunit</fullName>
        <ecNumber evidence="1">4.2.1.33</ecNumber>
    </recommendedName>
    <alternativeName>
        <fullName evidence="1">Alpha-IPM isomerase</fullName>
        <shortName evidence="1">IPMI</shortName>
    </alternativeName>
    <alternativeName>
        <fullName evidence="1">Isopropylmalate isomerase</fullName>
    </alternativeName>
</protein>
<sequence>MEKLTTLTGVGVPLRRSNVDTDQIIPAVFLKRVTKSGFDDALFYAWRRDPNFVLNKPEYAGKGQILVAGPEFGIGSSREHAVWALHDYGFRVVIAPSFADIFYGNTAKNGVLAAIMPQESVELLWKLLEEEPGREMTVSLETRTVTCGDVTLPFEVNDYVRWRLMNGYDDIDLTLQHEDDIAAYEKMRAEKFPFKPKTIPAKHWAEERIESAREPEDADWTGPLADRGII</sequence>